<reference key="1">
    <citation type="journal article" date="1994" name="Biochem. Biophys. Res. Commun.">
        <title>Identification of the bphA and bphB genes of Pseudomonas sp. strains KKS102 involved in degradation of biphenyl and polychlorinated biphenyls.</title>
        <authorList>
            <person name="Fukuda M."/>
            <person name="Yasukochi Y."/>
            <person name="Kikuchi Y."/>
            <person name="Nagata Y."/>
            <person name="Kimbara K."/>
            <person name="Horiuchi H."/>
            <person name="Takagi M."/>
            <person name="Yano K."/>
        </authorList>
    </citation>
    <scope>NUCLEOTIDE SEQUENCE [GENOMIC DNA]</scope>
</reference>
<proteinExistence type="evidence at protein level"/>
<accession>Q52440</accession>
<sequence length="109" mass="11913">MTFTKACSVDEVPPGEALQVSHDAQKVAIFNVDGEFFATQDQCTHGEWSLSEGGYLDGDVVECSLHMGKFCVRTGKVKSPPPCEPLKVYPIRIEGRDVLVDFSRAALHA</sequence>
<protein>
    <recommendedName>
        <fullName>Biphenyl dioxygenase ferredoxin subunit</fullName>
    </recommendedName>
</protein>
<dbReference type="EMBL" id="D17319">
    <property type="protein sequence ID" value="BAA04139.1"/>
    <property type="molecule type" value="Genomic_DNA"/>
</dbReference>
<dbReference type="PIR" id="JC2440">
    <property type="entry name" value="JC2440"/>
</dbReference>
<dbReference type="PDB" id="2E4P">
    <property type="method" value="X-ray"/>
    <property type="resolution" value="2.00 A"/>
    <property type="chains" value="A/B=1-109"/>
</dbReference>
<dbReference type="PDB" id="2E4Q">
    <property type="method" value="X-ray"/>
    <property type="resolution" value="1.80 A"/>
    <property type="chains" value="A/C=1-109"/>
</dbReference>
<dbReference type="PDB" id="2YVJ">
    <property type="method" value="X-ray"/>
    <property type="resolution" value="1.90 A"/>
    <property type="chains" value="B=1-109"/>
</dbReference>
<dbReference type="PDBsum" id="2E4P"/>
<dbReference type="PDBsum" id="2E4Q"/>
<dbReference type="PDBsum" id="2YVJ"/>
<dbReference type="SMR" id="Q52440"/>
<dbReference type="EvolutionaryTrace" id="Q52440"/>
<dbReference type="GO" id="GO:0051537">
    <property type="term" value="F:2 iron, 2 sulfur cluster binding"/>
    <property type="evidence" value="ECO:0007669"/>
    <property type="project" value="UniProtKB-KW"/>
</dbReference>
<dbReference type="GO" id="GO:0046872">
    <property type="term" value="F:metal ion binding"/>
    <property type="evidence" value="ECO:0007669"/>
    <property type="project" value="UniProtKB-KW"/>
</dbReference>
<dbReference type="GO" id="GO:0009056">
    <property type="term" value="P:catabolic process"/>
    <property type="evidence" value="ECO:0007669"/>
    <property type="project" value="UniProtKB-KW"/>
</dbReference>
<dbReference type="CDD" id="cd03528">
    <property type="entry name" value="Rieske_RO_ferredoxin"/>
    <property type="match status" value="1"/>
</dbReference>
<dbReference type="Gene3D" id="2.102.10.10">
    <property type="entry name" value="Rieske [2Fe-2S] iron-sulphur domain"/>
    <property type="match status" value="1"/>
</dbReference>
<dbReference type="InterPro" id="IPR017941">
    <property type="entry name" value="Rieske_2Fe-2S"/>
</dbReference>
<dbReference type="InterPro" id="IPR036922">
    <property type="entry name" value="Rieske_2Fe-2S_sf"/>
</dbReference>
<dbReference type="PANTHER" id="PTHR21496:SF23">
    <property type="entry name" value="3-PHENYLPROPIONATE_CINNAMIC ACID DIOXYGENASE FERREDOXIN SUBUNIT"/>
    <property type="match status" value="1"/>
</dbReference>
<dbReference type="PANTHER" id="PTHR21496">
    <property type="entry name" value="FERREDOXIN-RELATED"/>
    <property type="match status" value="1"/>
</dbReference>
<dbReference type="Pfam" id="PF00355">
    <property type="entry name" value="Rieske"/>
    <property type="match status" value="1"/>
</dbReference>
<dbReference type="SUPFAM" id="SSF50022">
    <property type="entry name" value="ISP domain"/>
    <property type="match status" value="1"/>
</dbReference>
<dbReference type="PROSITE" id="PS51296">
    <property type="entry name" value="RIESKE"/>
    <property type="match status" value="1"/>
</dbReference>
<organism>
    <name type="scientific">Pseudomonas sp. (strain KKS102)</name>
    <dbReference type="NCBI Taxonomy" id="307"/>
    <lineage>
        <taxon>Bacteria</taxon>
        <taxon>Pseudomonadati</taxon>
        <taxon>Pseudomonadota</taxon>
    </lineage>
</organism>
<comment type="function">
    <text>This protein seems to be a 2Fe-2S ferredoxin.</text>
</comment>
<comment type="subunit">
    <text>This dioxygenase system consists of four proteins: the two subunits of the hydroxylase component (BphA1 and BphA2), a ferredoxin (BphA3) and a ferredoxin reductase (BphA4).</text>
</comment>
<comment type="similarity">
    <text evidence="2">Belongs to the bacterial ring-hydroxylating dioxygenase ferredoxin component family.</text>
</comment>
<gene>
    <name type="primary">bphA3</name>
</gene>
<keyword id="KW-0001">2Fe-2S</keyword>
<keyword id="KW-0002">3D-structure</keyword>
<keyword id="KW-0058">Aromatic hydrocarbons catabolism</keyword>
<keyword id="KW-0249">Electron transport</keyword>
<keyword id="KW-0408">Iron</keyword>
<keyword id="KW-0411">Iron-sulfur</keyword>
<keyword id="KW-0479">Metal-binding</keyword>
<keyword id="KW-0813">Transport</keyword>
<evidence type="ECO:0000255" key="1">
    <source>
        <dbReference type="PROSITE-ProRule" id="PRU00628"/>
    </source>
</evidence>
<evidence type="ECO:0000305" key="2"/>
<evidence type="ECO:0007829" key="3">
    <source>
        <dbReference type="PDB" id="2E4Q"/>
    </source>
</evidence>
<evidence type="ECO:0007829" key="4">
    <source>
        <dbReference type="PDB" id="2YVJ"/>
    </source>
</evidence>
<name>BPHA3_PSES1</name>
<feature type="chain" id="PRO_0000201687" description="Biphenyl dioxygenase ferredoxin subunit">
    <location>
        <begin position="1"/>
        <end position="109"/>
    </location>
</feature>
<feature type="domain" description="Rieske" evidence="1">
    <location>
        <begin position="4"/>
        <end position="100"/>
    </location>
</feature>
<feature type="binding site" evidence="1">
    <location>
        <position position="43"/>
    </location>
    <ligand>
        <name>[2Fe-2S] cluster</name>
        <dbReference type="ChEBI" id="CHEBI:190135"/>
    </ligand>
</feature>
<feature type="binding site" evidence="1">
    <location>
        <position position="45"/>
    </location>
    <ligand>
        <name>[2Fe-2S] cluster</name>
        <dbReference type="ChEBI" id="CHEBI:190135"/>
    </ligand>
</feature>
<feature type="binding site" evidence="1">
    <location>
        <position position="63"/>
    </location>
    <ligand>
        <name>[2Fe-2S] cluster</name>
        <dbReference type="ChEBI" id="CHEBI:190135"/>
    </ligand>
</feature>
<feature type="binding site" evidence="1">
    <location>
        <position position="66"/>
    </location>
    <ligand>
        <name>[2Fe-2S] cluster</name>
        <dbReference type="ChEBI" id="CHEBI:190135"/>
    </ligand>
</feature>
<feature type="strand" evidence="3">
    <location>
        <begin position="4"/>
        <end position="8"/>
    </location>
</feature>
<feature type="helix" evidence="3">
    <location>
        <begin position="9"/>
        <end position="11"/>
    </location>
</feature>
<feature type="strand" evidence="3">
    <location>
        <begin position="17"/>
        <end position="22"/>
    </location>
</feature>
<feature type="strand" evidence="3">
    <location>
        <begin position="25"/>
        <end position="32"/>
    </location>
</feature>
<feature type="strand" evidence="3">
    <location>
        <begin position="35"/>
        <end position="42"/>
    </location>
</feature>
<feature type="turn" evidence="3">
    <location>
        <begin position="44"/>
        <end position="46"/>
    </location>
</feature>
<feature type="turn" evidence="4">
    <location>
        <begin position="51"/>
        <end position="53"/>
    </location>
</feature>
<feature type="strand" evidence="3">
    <location>
        <begin position="55"/>
        <end position="57"/>
    </location>
</feature>
<feature type="strand" evidence="3">
    <location>
        <begin position="60"/>
        <end position="62"/>
    </location>
</feature>
<feature type="turn" evidence="3">
    <location>
        <begin position="64"/>
        <end position="66"/>
    </location>
</feature>
<feature type="strand" evidence="3">
    <location>
        <begin position="69"/>
        <end position="71"/>
    </location>
</feature>
<feature type="turn" evidence="3">
    <location>
        <begin position="72"/>
        <end position="74"/>
    </location>
</feature>
<feature type="strand" evidence="3">
    <location>
        <begin position="77"/>
        <end position="81"/>
    </location>
</feature>
<feature type="strand" evidence="3">
    <location>
        <begin position="91"/>
        <end position="94"/>
    </location>
</feature>
<feature type="strand" evidence="3">
    <location>
        <begin position="97"/>
        <end position="100"/>
    </location>
</feature>
<feature type="strand" evidence="4">
    <location>
        <begin position="102"/>
        <end position="104"/>
    </location>
</feature>